<evidence type="ECO:0000255" key="1">
    <source>
        <dbReference type="HAMAP-Rule" id="MF_00127"/>
    </source>
</evidence>
<comment type="catalytic activity">
    <reaction evidence="1">
        <text>tRNA(His) + L-histidine + ATP = L-histidyl-tRNA(His) + AMP + diphosphate + H(+)</text>
        <dbReference type="Rhea" id="RHEA:17313"/>
        <dbReference type="Rhea" id="RHEA-COMP:9665"/>
        <dbReference type="Rhea" id="RHEA-COMP:9689"/>
        <dbReference type="ChEBI" id="CHEBI:15378"/>
        <dbReference type="ChEBI" id="CHEBI:30616"/>
        <dbReference type="ChEBI" id="CHEBI:33019"/>
        <dbReference type="ChEBI" id="CHEBI:57595"/>
        <dbReference type="ChEBI" id="CHEBI:78442"/>
        <dbReference type="ChEBI" id="CHEBI:78527"/>
        <dbReference type="ChEBI" id="CHEBI:456215"/>
        <dbReference type="EC" id="6.1.1.21"/>
    </reaction>
</comment>
<comment type="subunit">
    <text evidence="1">Homodimer.</text>
</comment>
<comment type="subcellular location">
    <subcellularLocation>
        <location evidence="1">Cytoplasm</location>
    </subcellularLocation>
</comment>
<comment type="similarity">
    <text evidence="1">Belongs to the class-II aminoacyl-tRNA synthetase family.</text>
</comment>
<reference key="1">
    <citation type="journal article" date="2008" name="J. Bacteriol.">
        <title>Genome sequence of Lactobacillus helveticus: an organism distinguished by selective gene loss and IS element expansion.</title>
        <authorList>
            <person name="Callanan M."/>
            <person name="Kaleta P."/>
            <person name="O'Callaghan J."/>
            <person name="O'Sullivan O."/>
            <person name="Jordan K."/>
            <person name="McAuliffe O."/>
            <person name="Sangrador-Vegas A."/>
            <person name="Slattery L."/>
            <person name="Fitzgerald G.F."/>
            <person name="Beresford T."/>
            <person name="Ross R.P."/>
        </authorList>
    </citation>
    <scope>NUCLEOTIDE SEQUENCE [LARGE SCALE GENOMIC DNA]</scope>
    <source>
        <strain>DPC 4571</strain>
    </source>
</reference>
<proteinExistence type="inferred from homology"/>
<protein>
    <recommendedName>
        <fullName evidence="1">Histidine--tRNA ligase</fullName>
        <ecNumber evidence="1">6.1.1.21</ecNumber>
    </recommendedName>
    <alternativeName>
        <fullName evidence="1">Histidyl-tRNA synthetase</fullName>
        <shortName evidence="1">HisRS</shortName>
    </alternativeName>
</protein>
<organism>
    <name type="scientific">Lactobacillus helveticus (strain DPC 4571)</name>
    <dbReference type="NCBI Taxonomy" id="405566"/>
    <lineage>
        <taxon>Bacteria</taxon>
        <taxon>Bacillati</taxon>
        <taxon>Bacillota</taxon>
        <taxon>Bacilli</taxon>
        <taxon>Lactobacillales</taxon>
        <taxon>Lactobacillaceae</taxon>
        <taxon>Lactobacillus</taxon>
    </lineage>
</organism>
<keyword id="KW-0030">Aminoacyl-tRNA synthetase</keyword>
<keyword id="KW-0067">ATP-binding</keyword>
<keyword id="KW-0963">Cytoplasm</keyword>
<keyword id="KW-0436">Ligase</keyword>
<keyword id="KW-0547">Nucleotide-binding</keyword>
<keyword id="KW-0648">Protein biosynthesis</keyword>
<gene>
    <name evidence="1" type="primary">hisS</name>
    <name type="ordered locus">lhv_1013</name>
</gene>
<feature type="chain" id="PRO_1000071404" description="Histidine--tRNA ligase">
    <location>
        <begin position="1"/>
        <end position="428"/>
    </location>
</feature>
<accession>A8YUZ9</accession>
<dbReference type="EC" id="6.1.1.21" evidence="1"/>
<dbReference type="EMBL" id="CP000517">
    <property type="protein sequence ID" value="ABX27087.1"/>
    <property type="molecule type" value="Genomic_DNA"/>
</dbReference>
<dbReference type="RefSeq" id="WP_012211789.1">
    <property type="nucleotide sequence ID" value="NC_010080.1"/>
</dbReference>
<dbReference type="SMR" id="A8YUZ9"/>
<dbReference type="KEGG" id="lhe:lhv_1013"/>
<dbReference type="eggNOG" id="COG0124">
    <property type="taxonomic scope" value="Bacteria"/>
</dbReference>
<dbReference type="HOGENOM" id="CLU_025113_1_1_9"/>
<dbReference type="Proteomes" id="UP000000790">
    <property type="component" value="Chromosome"/>
</dbReference>
<dbReference type="GO" id="GO:0005737">
    <property type="term" value="C:cytoplasm"/>
    <property type="evidence" value="ECO:0007669"/>
    <property type="project" value="UniProtKB-SubCell"/>
</dbReference>
<dbReference type="GO" id="GO:0005524">
    <property type="term" value="F:ATP binding"/>
    <property type="evidence" value="ECO:0007669"/>
    <property type="project" value="UniProtKB-UniRule"/>
</dbReference>
<dbReference type="GO" id="GO:0140096">
    <property type="term" value="F:catalytic activity, acting on a protein"/>
    <property type="evidence" value="ECO:0007669"/>
    <property type="project" value="UniProtKB-ARBA"/>
</dbReference>
<dbReference type="GO" id="GO:0004821">
    <property type="term" value="F:histidine-tRNA ligase activity"/>
    <property type="evidence" value="ECO:0007669"/>
    <property type="project" value="UniProtKB-UniRule"/>
</dbReference>
<dbReference type="GO" id="GO:0016740">
    <property type="term" value="F:transferase activity"/>
    <property type="evidence" value="ECO:0007669"/>
    <property type="project" value="UniProtKB-ARBA"/>
</dbReference>
<dbReference type="GO" id="GO:0006427">
    <property type="term" value="P:histidyl-tRNA aminoacylation"/>
    <property type="evidence" value="ECO:0007669"/>
    <property type="project" value="UniProtKB-UniRule"/>
</dbReference>
<dbReference type="CDD" id="cd00773">
    <property type="entry name" value="HisRS-like_core"/>
    <property type="match status" value="1"/>
</dbReference>
<dbReference type="CDD" id="cd00859">
    <property type="entry name" value="HisRS_anticodon"/>
    <property type="match status" value="1"/>
</dbReference>
<dbReference type="Gene3D" id="3.40.50.800">
    <property type="entry name" value="Anticodon-binding domain"/>
    <property type="match status" value="1"/>
</dbReference>
<dbReference type="Gene3D" id="3.30.930.10">
    <property type="entry name" value="Bira Bifunctional Protein, Domain 2"/>
    <property type="match status" value="1"/>
</dbReference>
<dbReference type="HAMAP" id="MF_00127">
    <property type="entry name" value="His_tRNA_synth"/>
    <property type="match status" value="1"/>
</dbReference>
<dbReference type="InterPro" id="IPR006195">
    <property type="entry name" value="aa-tRNA-synth_II"/>
</dbReference>
<dbReference type="InterPro" id="IPR045864">
    <property type="entry name" value="aa-tRNA-synth_II/BPL/LPL"/>
</dbReference>
<dbReference type="InterPro" id="IPR004154">
    <property type="entry name" value="Anticodon-bd"/>
</dbReference>
<dbReference type="InterPro" id="IPR036621">
    <property type="entry name" value="Anticodon-bd_dom_sf"/>
</dbReference>
<dbReference type="InterPro" id="IPR015807">
    <property type="entry name" value="His-tRNA-ligase"/>
</dbReference>
<dbReference type="InterPro" id="IPR041715">
    <property type="entry name" value="HisRS-like_core"/>
</dbReference>
<dbReference type="InterPro" id="IPR004516">
    <property type="entry name" value="HisRS/HisZ"/>
</dbReference>
<dbReference type="InterPro" id="IPR033656">
    <property type="entry name" value="HisRS_anticodon"/>
</dbReference>
<dbReference type="NCBIfam" id="TIGR00442">
    <property type="entry name" value="hisS"/>
    <property type="match status" value="1"/>
</dbReference>
<dbReference type="PANTHER" id="PTHR43707:SF1">
    <property type="entry name" value="HISTIDINE--TRNA LIGASE, MITOCHONDRIAL-RELATED"/>
    <property type="match status" value="1"/>
</dbReference>
<dbReference type="PANTHER" id="PTHR43707">
    <property type="entry name" value="HISTIDYL-TRNA SYNTHETASE"/>
    <property type="match status" value="1"/>
</dbReference>
<dbReference type="Pfam" id="PF03129">
    <property type="entry name" value="HGTP_anticodon"/>
    <property type="match status" value="1"/>
</dbReference>
<dbReference type="Pfam" id="PF13393">
    <property type="entry name" value="tRNA-synt_His"/>
    <property type="match status" value="1"/>
</dbReference>
<dbReference type="PIRSF" id="PIRSF001549">
    <property type="entry name" value="His-tRNA_synth"/>
    <property type="match status" value="1"/>
</dbReference>
<dbReference type="SUPFAM" id="SSF52954">
    <property type="entry name" value="Class II aaRS ABD-related"/>
    <property type="match status" value="1"/>
</dbReference>
<dbReference type="SUPFAM" id="SSF55681">
    <property type="entry name" value="Class II aaRS and biotin synthetases"/>
    <property type="match status" value="1"/>
</dbReference>
<dbReference type="PROSITE" id="PS50862">
    <property type="entry name" value="AA_TRNA_LIGASE_II"/>
    <property type="match status" value="1"/>
</dbReference>
<name>SYH_LACH4</name>
<sequence length="428" mass="48979">MRVQKPKGTVDILPEQSGSWQKVEETARNFFNRANYREIRTPSFENYEIFSRSSGDSSEIVEKQMYDFNDKGGRHIALRPEGTAGVVRAYVEDKMYAPEVVKPFNVFYMESTFRYERPQAGRQREFHQIGVESFGSSNPLADVQTIMMGHDLLGELGVKNYQLHINTLGNEQVRKGYHDALVNYFTPVKDELSEDSQRRLRDNPLRILDSKDDRDKKFLPDAPKIRDFLDDNSKANFESILKMLDQLGIDYVIDDDLVRGLDYYTGVIFEFMVEDKSLWESATTILGGGRYDHLVEEFNGPETPAVGFGIGEERLMLVLEKQNPELFKNEGIDFFITNIGEGTAQKAIEIARSLRKQGFEADFDVNQKKLKGQFKKADREGAKYVITLGEKELANGVLNIKRLADGKTIDLSLEDINDMNKVMKELKD</sequence>